<protein>
    <recommendedName>
        <fullName evidence="3">Conotoxin Cal6.30</fullName>
    </recommendedName>
    <alternativeName>
        <fullName evidence="2">O1_cal6.30</fullName>
    </alternativeName>
</protein>
<proteinExistence type="inferred from homology"/>
<evidence type="ECO:0000255" key="1"/>
<evidence type="ECO:0000303" key="2">
    <source>
    </source>
</evidence>
<evidence type="ECO:0000305" key="3"/>
<evidence type="ECO:0000305" key="4">
    <source>
    </source>
</evidence>
<reference key="1">
    <citation type="journal article" date="2019" name="Toxins">
        <title>The diversified O-superfamily in Californiconus californicus presents a conotoxin with antimycobacterial activity.</title>
        <authorList>
            <person name="Bernaldez-Sarabia J."/>
            <person name="Figueroa-Montiel A."/>
            <person name="Duenas S."/>
            <person name="Cervantes-Luevano K."/>
            <person name="Beltran J.A."/>
            <person name="Ortiz E."/>
            <person name="Jimenez S."/>
            <person name="Possani L.D."/>
            <person name="Paniagua-Solis J.F."/>
            <person name="Gonzalez-Canudas J."/>
            <person name="Licea-Navarro A."/>
        </authorList>
    </citation>
    <scope>NUCLEOTIDE SEQUENCE [MRNA]</scope>
    <source>
        <tissue>Venom duct</tissue>
    </source>
</reference>
<comment type="function">
    <text evidence="3">Probable neurotoxin.</text>
</comment>
<comment type="subcellular location">
    <subcellularLocation>
        <location evidence="4">Secreted</location>
    </subcellularLocation>
</comment>
<comment type="tissue specificity">
    <text evidence="4">Expressed by the venom duct.</text>
</comment>
<comment type="domain">
    <text evidence="3">The cysteine framework is VI/VII (C-C-CC-C-C).</text>
</comment>
<comment type="domain">
    <text evidence="3">The presence of a 'disulfide through disulfide knot' structurally defines this protein as a knottin.</text>
</comment>
<sequence length="60" mass="6601">MKVTCVLTLAVLILTIGQIANADSTLGQRYCKASGSWCGIHKHRECCSGNCFFWCVYNGK</sequence>
<dbReference type="GO" id="GO:0005576">
    <property type="term" value="C:extracellular region"/>
    <property type="evidence" value="ECO:0007669"/>
    <property type="project" value="UniProtKB-SubCell"/>
</dbReference>
<dbReference type="GO" id="GO:0090729">
    <property type="term" value="F:toxin activity"/>
    <property type="evidence" value="ECO:0007669"/>
    <property type="project" value="UniProtKB-KW"/>
</dbReference>
<accession>P0DTZ2</accession>
<keyword id="KW-1015">Disulfide bond</keyword>
<keyword id="KW-0960">Knottin</keyword>
<keyword id="KW-0528">Neurotoxin</keyword>
<keyword id="KW-0964">Secreted</keyword>
<keyword id="KW-0732">Signal</keyword>
<keyword id="KW-0800">Toxin</keyword>
<feature type="signal peptide" evidence="1">
    <location>
        <begin position="1"/>
        <end position="22"/>
    </location>
</feature>
<feature type="chain" id="PRO_0000450974" description="Conotoxin Cal6.30" evidence="3">
    <location>
        <begin position="23"/>
        <end position="60"/>
    </location>
</feature>
<feature type="disulfide bond" evidence="3">
    <location>
        <begin position="31"/>
        <end position="47"/>
    </location>
</feature>
<feature type="disulfide bond" evidence="3">
    <location>
        <begin position="38"/>
        <end position="51"/>
    </location>
</feature>
<feature type="disulfide bond" evidence="3">
    <location>
        <begin position="46"/>
        <end position="55"/>
    </location>
</feature>
<name>C630_CONCL</name>
<organism>
    <name type="scientific">Californiconus californicus</name>
    <name type="common">California cone</name>
    <name type="synonym">Conus californicus</name>
    <dbReference type="NCBI Taxonomy" id="1736779"/>
    <lineage>
        <taxon>Eukaryota</taxon>
        <taxon>Metazoa</taxon>
        <taxon>Spiralia</taxon>
        <taxon>Lophotrochozoa</taxon>
        <taxon>Mollusca</taxon>
        <taxon>Gastropoda</taxon>
        <taxon>Caenogastropoda</taxon>
        <taxon>Neogastropoda</taxon>
        <taxon>Conoidea</taxon>
        <taxon>Conidae</taxon>
        <taxon>Californiconus</taxon>
    </lineage>
</organism>